<dbReference type="EC" id="3.1.21.2"/>
<dbReference type="EMBL" id="AY653733">
    <property type="protein sequence ID" value="AAV50568.1"/>
    <property type="molecule type" value="Genomic_DNA"/>
</dbReference>
<dbReference type="SMR" id="Q5UPY4"/>
<dbReference type="KEGG" id="vg:9924911"/>
<dbReference type="OrthoDB" id="7161at10239"/>
<dbReference type="Proteomes" id="UP000001134">
    <property type="component" value="Genome"/>
</dbReference>
<dbReference type="GO" id="GO:0008833">
    <property type="term" value="F:deoxyribonuclease IV (phage-T4-induced) activity"/>
    <property type="evidence" value="ECO:0007669"/>
    <property type="project" value="UniProtKB-EC"/>
</dbReference>
<dbReference type="GO" id="GO:0003677">
    <property type="term" value="F:DNA binding"/>
    <property type="evidence" value="ECO:0007669"/>
    <property type="project" value="InterPro"/>
</dbReference>
<dbReference type="GO" id="GO:0003906">
    <property type="term" value="F:DNA-(apurinic or apyrimidinic site) endonuclease activity"/>
    <property type="evidence" value="ECO:0007669"/>
    <property type="project" value="TreeGrafter"/>
</dbReference>
<dbReference type="GO" id="GO:0008081">
    <property type="term" value="F:phosphoric diester hydrolase activity"/>
    <property type="evidence" value="ECO:0007669"/>
    <property type="project" value="TreeGrafter"/>
</dbReference>
<dbReference type="GO" id="GO:0008270">
    <property type="term" value="F:zinc ion binding"/>
    <property type="evidence" value="ECO:0007669"/>
    <property type="project" value="InterPro"/>
</dbReference>
<dbReference type="GO" id="GO:0006284">
    <property type="term" value="P:base-excision repair"/>
    <property type="evidence" value="ECO:0007669"/>
    <property type="project" value="TreeGrafter"/>
</dbReference>
<dbReference type="CDD" id="cd00019">
    <property type="entry name" value="AP2Ec"/>
    <property type="match status" value="1"/>
</dbReference>
<dbReference type="Gene3D" id="3.20.20.150">
    <property type="entry name" value="Divalent-metal-dependent TIM barrel enzymes"/>
    <property type="match status" value="1"/>
</dbReference>
<dbReference type="InterPro" id="IPR001719">
    <property type="entry name" value="AP_endonuc_2"/>
</dbReference>
<dbReference type="InterPro" id="IPR018246">
    <property type="entry name" value="AP_endonuc_F2_Zn_BS"/>
</dbReference>
<dbReference type="InterPro" id="IPR036237">
    <property type="entry name" value="Xyl_isomerase-like_sf"/>
</dbReference>
<dbReference type="InterPro" id="IPR013022">
    <property type="entry name" value="Xyl_isomerase-like_TIM-brl"/>
</dbReference>
<dbReference type="NCBIfam" id="TIGR00587">
    <property type="entry name" value="nfo"/>
    <property type="match status" value="1"/>
</dbReference>
<dbReference type="PANTHER" id="PTHR21445:SF0">
    <property type="entry name" value="APURINIC-APYRIMIDINIC ENDONUCLEASE"/>
    <property type="match status" value="1"/>
</dbReference>
<dbReference type="PANTHER" id="PTHR21445">
    <property type="entry name" value="ENDONUCLEASE IV ENDODEOXYRIBONUCLEASE IV"/>
    <property type="match status" value="1"/>
</dbReference>
<dbReference type="Pfam" id="PF01261">
    <property type="entry name" value="AP_endonuc_2"/>
    <property type="match status" value="1"/>
</dbReference>
<dbReference type="SMART" id="SM00518">
    <property type="entry name" value="AP2Ec"/>
    <property type="match status" value="1"/>
</dbReference>
<dbReference type="SUPFAM" id="SSF51658">
    <property type="entry name" value="Xylose isomerase-like"/>
    <property type="match status" value="1"/>
</dbReference>
<dbReference type="PROSITE" id="PS00730">
    <property type="entry name" value="AP_NUCLEASE_F2_2"/>
    <property type="match status" value="1"/>
</dbReference>
<dbReference type="PROSITE" id="PS51432">
    <property type="entry name" value="AP_NUCLEASE_F2_4"/>
    <property type="match status" value="1"/>
</dbReference>
<gene>
    <name type="ordered locus">MIMI_R296</name>
</gene>
<comment type="function">
    <text evidence="1">Endonuclease IV plays a role in DNA repair. It cleaves phosphodiester bonds at apurinic or apyrimidinic sites (AP sites) to produce new 5'-ends that are base-free deoxyribose 5-phosphate residues (By similarity).</text>
</comment>
<comment type="catalytic activity">
    <reaction evidence="2">
        <text>Endonucleolytic cleavage to 5'-phosphooligonucleotide end-products.</text>
        <dbReference type="EC" id="3.1.21.2"/>
    </reaction>
</comment>
<comment type="cofactor">
    <cofactor evidence="2">
        <name>Zn(2+)</name>
        <dbReference type="ChEBI" id="CHEBI:29105"/>
    </cofactor>
    <text evidence="2">Binds 3 Zn(2+) ions.</text>
</comment>
<comment type="similarity">
    <text evidence="2">Belongs to the AP endonuclease 2 family.</text>
</comment>
<proteinExistence type="inferred from homology"/>
<organismHost>
    <name type="scientific">Acanthamoeba polyphaga</name>
    <name type="common">Amoeba</name>
    <dbReference type="NCBI Taxonomy" id="5757"/>
</organismHost>
<accession>Q5UPY4</accession>
<name>END4_MIMIV</name>
<sequence>MQSNINICTLSIFIIESMTTRIGRHINISKGFVSAPEYAKNIGCSVFQIFLGAPQQILSKARQKDELIEFGKQLIKHDLIMVVHGSYTINLCHPPGSKKFETSIKSLVKDLNATNLIGDRCLGVIIHMGKNISENKLTVDQAIDNYVTGIKTALSQTPDNTTIVLETGASQGSEVASHIDGLAQIYWCLNDAERERVYFCIDTCHIWATGYDISSPTGVKKFFKEFDKKIGVEKISCIHFNDSKTGLESKVDRHADLCYGEIGSNGLKAIAKFAKEYKIHLIMETPLDAINPETNQEISYNEEYNKVKSWLK</sequence>
<protein>
    <recommendedName>
        <fullName>Putative endonuclease 4</fullName>
        <ecNumber>3.1.21.2</ecNumber>
    </recommendedName>
    <alternativeName>
        <fullName>Endodeoxyribonuclease IV</fullName>
    </alternativeName>
    <alternativeName>
        <fullName>Endonuclease IV</fullName>
    </alternativeName>
</protein>
<organism>
    <name type="scientific">Acanthamoeba polyphaga mimivirus</name>
    <name type="common">APMV</name>
    <dbReference type="NCBI Taxonomy" id="212035"/>
    <lineage>
        <taxon>Viruses</taxon>
        <taxon>Varidnaviria</taxon>
        <taxon>Bamfordvirae</taxon>
        <taxon>Nucleocytoviricota</taxon>
        <taxon>Megaviricetes</taxon>
        <taxon>Imitervirales</taxon>
        <taxon>Mimiviridae</taxon>
        <taxon>Megamimivirinae</taxon>
        <taxon>Mimivirus</taxon>
        <taxon>Mimivirus bradfordmassiliense</taxon>
    </lineage>
</organism>
<keyword id="KW-0227">DNA damage</keyword>
<keyword id="KW-0234">DNA repair</keyword>
<keyword id="KW-0255">Endonuclease</keyword>
<keyword id="KW-0378">Hydrolase</keyword>
<keyword id="KW-0479">Metal-binding</keyword>
<keyword id="KW-0540">Nuclease</keyword>
<keyword id="KW-1185">Reference proteome</keyword>
<keyword id="KW-0862">Zinc</keyword>
<reference key="1">
    <citation type="journal article" date="2004" name="Science">
        <title>The 1.2-megabase genome sequence of Mimivirus.</title>
        <authorList>
            <person name="Raoult D."/>
            <person name="Audic S."/>
            <person name="Robert C."/>
            <person name="Abergel C."/>
            <person name="Renesto P."/>
            <person name="Ogata H."/>
            <person name="La Scola B."/>
            <person name="Susan M."/>
            <person name="Claverie J.-M."/>
        </authorList>
    </citation>
    <scope>NUCLEOTIDE SEQUENCE [LARGE SCALE GENOMIC DNA]</scope>
    <source>
        <strain>Rowbotham-Bradford</strain>
    </source>
</reference>
<feature type="chain" id="PRO_0000190896" description="Putative endonuclease 4">
    <location>
        <begin position="1"/>
        <end position="312"/>
    </location>
</feature>
<feature type="binding site" evidence="2">
    <location>
        <position position="84"/>
    </location>
    <ligand>
        <name>Zn(2+)</name>
        <dbReference type="ChEBI" id="CHEBI:29105"/>
        <label>1</label>
    </ligand>
</feature>
<feature type="binding site" evidence="2">
    <location>
        <position position="127"/>
    </location>
    <ligand>
        <name>Zn(2+)</name>
        <dbReference type="ChEBI" id="CHEBI:29105"/>
        <label>1</label>
    </ligand>
</feature>
<feature type="binding site" evidence="2">
    <location>
        <position position="166"/>
    </location>
    <ligand>
        <name>Zn(2+)</name>
        <dbReference type="ChEBI" id="CHEBI:29105"/>
        <label>1</label>
    </ligand>
</feature>
<feature type="binding site" evidence="2">
    <location>
        <position position="166"/>
    </location>
    <ligand>
        <name>Zn(2+)</name>
        <dbReference type="ChEBI" id="CHEBI:29105"/>
        <label>2</label>
    </ligand>
</feature>
<feature type="binding site" evidence="2">
    <location>
        <position position="202"/>
    </location>
    <ligand>
        <name>Zn(2+)</name>
        <dbReference type="ChEBI" id="CHEBI:29105"/>
        <label>2</label>
    </ligand>
</feature>
<feature type="binding site" evidence="2">
    <location>
        <position position="205"/>
    </location>
    <ligand>
        <name>Zn(2+)</name>
        <dbReference type="ChEBI" id="CHEBI:29105"/>
        <label>3</label>
    </ligand>
</feature>
<feature type="binding site" evidence="2">
    <location>
        <position position="239"/>
    </location>
    <ligand>
        <name>Zn(2+)</name>
        <dbReference type="ChEBI" id="CHEBI:29105"/>
        <label>2</label>
    </ligand>
</feature>
<feature type="binding site" evidence="2">
    <location>
        <position position="252"/>
    </location>
    <ligand>
        <name>Zn(2+)</name>
        <dbReference type="ChEBI" id="CHEBI:29105"/>
        <label>3</label>
    </ligand>
</feature>
<feature type="binding site" evidence="2">
    <location>
        <position position="254"/>
    </location>
    <ligand>
        <name>Zn(2+)</name>
        <dbReference type="ChEBI" id="CHEBI:29105"/>
        <label>3</label>
    </ligand>
</feature>
<feature type="binding site" evidence="2">
    <location>
        <position position="284"/>
    </location>
    <ligand>
        <name>Zn(2+)</name>
        <dbReference type="ChEBI" id="CHEBI:29105"/>
        <label>2</label>
    </ligand>
</feature>
<evidence type="ECO:0000250" key="1"/>
<evidence type="ECO:0000255" key="2">
    <source>
        <dbReference type="PROSITE-ProRule" id="PRU00763"/>
    </source>
</evidence>